<feature type="chain" id="PRO_0000461614" description="Cytochrome P450 monooxygenase ppzE">
    <location>
        <begin position="1"/>
        <end position="476"/>
    </location>
</feature>
<feature type="binding site" description="axial binding residue" evidence="1">
    <location>
        <position position="452"/>
    </location>
    <ligand>
        <name>heme</name>
        <dbReference type="ChEBI" id="CHEBI:30413"/>
    </ligand>
    <ligandPart>
        <name>Fe</name>
        <dbReference type="ChEBI" id="CHEBI:18248"/>
    </ligandPart>
</feature>
<proteinExistence type="inferred from homology"/>
<evidence type="ECO:0000250" key="1">
    <source>
        <dbReference type="UniProtKB" id="P04798"/>
    </source>
</evidence>
<evidence type="ECO:0000250" key="2">
    <source>
        <dbReference type="UniProtKB" id="Q4H424"/>
    </source>
</evidence>
<evidence type="ECO:0000269" key="3">
    <source>
    </source>
</evidence>
<evidence type="ECO:0000269" key="4">
    <source>
    </source>
</evidence>
<evidence type="ECO:0000303" key="5">
    <source>
    </source>
</evidence>
<evidence type="ECO:0000305" key="6"/>
<evidence type="ECO:0000305" key="7">
    <source>
    </source>
</evidence>
<evidence type="ECO:0000312" key="8">
    <source>
        <dbReference type="EMBL" id="DAC76721.1"/>
    </source>
</evidence>
<reference key="1">
    <citation type="journal article" date="2019" name="Environ. Microbiol.">
        <title>Orthologous peramine and pyrrolopyrazine-producing biosynthetic gene clusters in Metarhizium rileyi, Metarhizium majus and Cladonia grayi.</title>
        <authorList>
            <person name="Berry D."/>
            <person name="Mace W."/>
            <person name="Rehner S.A."/>
            <person name="Grage K."/>
            <person name="Dijkwel P.P."/>
            <person name="Young C.A."/>
            <person name="Scott B."/>
        </authorList>
    </citation>
    <scope>NUCLEOTIDE SEQUENCE [GENOMIC DNA]</scope>
    <scope>FUNCTION</scope>
    <scope>PATHWAY</scope>
    <source>
        <strain>ARSEF 297</strain>
    </source>
</reference>
<reference key="2">
    <citation type="journal article" date="2024" name="J. Am. Chem. Soc.">
        <title>Two Iron(II), alpha-Ketoglutarate-Dependent Enzymes Encoded by the PPZ Gene Cluster of Metarhizium majus Enable Production of 8-Hydroxyperamine.</title>
        <authorList>
            <person name="Rothchild K.W."/>
            <person name="Hagar M."/>
            <person name="Berry D."/>
            <person name="Ryan K.S."/>
        </authorList>
    </citation>
    <scope>FUNCTION</scope>
    <scope>PATHWAY</scope>
</reference>
<organism evidence="8">
    <name type="scientific">Metarhizium majus (strain ARSEF 297)</name>
    <dbReference type="NCBI Taxonomy" id="1276143"/>
    <lineage>
        <taxon>Eukaryota</taxon>
        <taxon>Fungi</taxon>
        <taxon>Dikarya</taxon>
        <taxon>Ascomycota</taxon>
        <taxon>Pezizomycotina</taxon>
        <taxon>Sordariomycetes</taxon>
        <taxon>Hypocreomycetidae</taxon>
        <taxon>Hypocreales</taxon>
        <taxon>Clavicipitaceae</taxon>
        <taxon>Metarhizium</taxon>
        <taxon>Metarhizium majus</taxon>
    </lineage>
</organism>
<accession>A0A455ZIK8</accession>
<keyword id="KW-0349">Heme</keyword>
<keyword id="KW-0408">Iron</keyword>
<keyword id="KW-0479">Metal-binding</keyword>
<keyword id="KW-0503">Monooxygenase</keyword>
<keyword id="KW-0560">Oxidoreductase</keyword>
<gene>
    <name evidence="5" type="primary">ppzE</name>
</gene>
<protein>
    <recommendedName>
        <fullName evidence="5">Cytochrome P450 monooxygenase ppzE</fullName>
        <ecNumber evidence="7">1.-.-.-</ecNumber>
    </recommendedName>
    <alternativeName>
        <fullName evidence="5">Pyrrolopyrazine biosynthesis cluster protein E</fullName>
    </alternativeName>
</protein>
<comment type="function">
    <text evidence="2 3 4">Cytochrome P450 monooxygenase; part of the gene cluster that mediates the biosynthesis of pyrrolopyrazines, secondary metabolites showing insecticidal activity (PubMed:30452111, PubMed:38578094). The role of ppzE within the pathway has still to be determined (PubMed:38578094). The single multifunctional NRPS ppzA is sufficient to produce peramine via condensation of 1-pyrroline-5-carboxylate and arginine, N-methylation of the alpha-amino group of arginine and reduction of the thioester and the cyclization to form an iminium ion resulting in release from the peptide synthetase. Deprotonation of this intermediate and oxidation of the pyrroline ring would give rise to peramine (By similarity). In Epichloe species that produce only peramine, the peramine synthetase gene is not localized in a gene cluster, in contrast to Metarhizium species that contain additional pyrrolopyrazine biosynthesis genes. The 2-oxoglutarate-Fe(II) type oxidoreductase ppzC hydroxylates peramine to yield the newly identified compound 8-hydroxyperamine whereas ppzD converts L-proline into trans-4-hydroxy-L-proline, a precursor of peramine biosynthesis (PubMed:38578094).</text>
</comment>
<comment type="cofactor">
    <cofactor evidence="1">
        <name>heme</name>
        <dbReference type="ChEBI" id="CHEBI:30413"/>
    </cofactor>
</comment>
<comment type="pathway">
    <text evidence="7">Secondary metabolite biosynthesis.</text>
</comment>
<comment type="similarity">
    <text evidence="6">Belongs to the cytochrome P450 family.</text>
</comment>
<sequence>MLSIDHVDWLELIRVTLHPLAKFPGPKLAGASYCYEFWYEVICGIQYTQKIIKLHEQYGPIVRINPDELHFNDVDFVDVVYTAGARKRDKSSHYLAGFGGVSKSTFGTLDHMHHRTRRRALNKFFSKSRVLQIEDSIHEKSQQLCDKFLAYRDQGPFDLTGAFSCIATDTVTEYCFGSSPGFLNQDGWEPNCKSYFETIERMAHVTRHVPWILYLAKWLPLSIIRLVSSDLNSFLVDTRVKKPERLKRVVLDAERHDAKDCPVFLELLNSDLPPREKSKQRFMYEANGATLAGSGSTAIAMSNIVYNLVANPRIGHKLRSELLGKVSDPKNLPRWSSLEELPYLTAVIHEGLRSMYDPSKERLPYDPSQERLPRIATEEELIYKDGSTPGKSKYVIPRGYAIGTSAHVVHSDESIFPNASQFNPERWLGRDGQRNRELERHLLSFSKGSRYCLGMHCRCTTCLALPASVRNGTRGY</sequence>
<dbReference type="EC" id="1.-.-.-" evidence="7"/>
<dbReference type="EMBL" id="BK010672">
    <property type="protein sequence ID" value="DAC76721.1"/>
    <property type="molecule type" value="Genomic_DNA"/>
</dbReference>
<dbReference type="GO" id="GO:0020037">
    <property type="term" value="F:heme binding"/>
    <property type="evidence" value="ECO:0007669"/>
    <property type="project" value="InterPro"/>
</dbReference>
<dbReference type="GO" id="GO:0005506">
    <property type="term" value="F:iron ion binding"/>
    <property type="evidence" value="ECO:0007669"/>
    <property type="project" value="InterPro"/>
</dbReference>
<dbReference type="GO" id="GO:0004497">
    <property type="term" value="F:monooxygenase activity"/>
    <property type="evidence" value="ECO:0007669"/>
    <property type="project" value="UniProtKB-KW"/>
</dbReference>
<dbReference type="GO" id="GO:0016705">
    <property type="term" value="F:oxidoreductase activity, acting on paired donors, with incorporation or reduction of molecular oxygen"/>
    <property type="evidence" value="ECO:0007669"/>
    <property type="project" value="InterPro"/>
</dbReference>
<dbReference type="CDD" id="cd11062">
    <property type="entry name" value="CYP58-like"/>
    <property type="match status" value="1"/>
</dbReference>
<dbReference type="Gene3D" id="1.10.630.10">
    <property type="entry name" value="Cytochrome P450"/>
    <property type="match status" value="1"/>
</dbReference>
<dbReference type="InterPro" id="IPR001128">
    <property type="entry name" value="Cyt_P450"/>
</dbReference>
<dbReference type="InterPro" id="IPR017972">
    <property type="entry name" value="Cyt_P450_CS"/>
</dbReference>
<dbReference type="InterPro" id="IPR002403">
    <property type="entry name" value="Cyt_P450_E_grp-IV"/>
</dbReference>
<dbReference type="InterPro" id="IPR036396">
    <property type="entry name" value="Cyt_P450_sf"/>
</dbReference>
<dbReference type="InterPro" id="IPR050121">
    <property type="entry name" value="Cytochrome_P450_monoxygenase"/>
</dbReference>
<dbReference type="PANTHER" id="PTHR24305">
    <property type="entry name" value="CYTOCHROME P450"/>
    <property type="match status" value="1"/>
</dbReference>
<dbReference type="PANTHER" id="PTHR24305:SF147">
    <property type="entry name" value="P450, PUTATIVE (EUROFUNG)-RELATED"/>
    <property type="match status" value="1"/>
</dbReference>
<dbReference type="Pfam" id="PF00067">
    <property type="entry name" value="p450"/>
    <property type="match status" value="1"/>
</dbReference>
<dbReference type="PRINTS" id="PR00465">
    <property type="entry name" value="EP450IV"/>
</dbReference>
<dbReference type="SUPFAM" id="SSF48264">
    <property type="entry name" value="Cytochrome P450"/>
    <property type="match status" value="1"/>
</dbReference>
<dbReference type="PROSITE" id="PS00086">
    <property type="entry name" value="CYTOCHROME_P450"/>
    <property type="match status" value="1"/>
</dbReference>
<name>PPZE_METMF</name>